<proteinExistence type="inferred from homology"/>
<organism>
    <name type="scientific">Yersinia enterocolitica serotype O:8 / biotype 1B (strain NCTC 13174 / 8081)</name>
    <dbReference type="NCBI Taxonomy" id="393305"/>
    <lineage>
        <taxon>Bacteria</taxon>
        <taxon>Pseudomonadati</taxon>
        <taxon>Pseudomonadota</taxon>
        <taxon>Gammaproteobacteria</taxon>
        <taxon>Enterobacterales</taxon>
        <taxon>Yersiniaceae</taxon>
        <taxon>Yersinia</taxon>
    </lineage>
</organism>
<accession>A1JM38</accession>
<comment type="function">
    <text evidence="1">Catalyzes a reversible aldol reaction between acetaldehyde and D-glyceraldehyde 3-phosphate to generate 2-deoxy-D-ribose 5-phosphate.</text>
</comment>
<comment type="catalytic activity">
    <reaction evidence="1">
        <text>2-deoxy-D-ribose 5-phosphate = D-glyceraldehyde 3-phosphate + acetaldehyde</text>
        <dbReference type="Rhea" id="RHEA:12821"/>
        <dbReference type="ChEBI" id="CHEBI:15343"/>
        <dbReference type="ChEBI" id="CHEBI:59776"/>
        <dbReference type="ChEBI" id="CHEBI:62877"/>
        <dbReference type="EC" id="4.1.2.4"/>
    </reaction>
</comment>
<comment type="pathway">
    <text evidence="1">Carbohydrate degradation; 2-deoxy-D-ribose 1-phosphate degradation; D-glyceraldehyde 3-phosphate and acetaldehyde from 2-deoxy-alpha-D-ribose 1-phosphate: step 2/2.</text>
</comment>
<comment type="subcellular location">
    <subcellularLocation>
        <location evidence="1">Cytoplasm</location>
    </subcellularLocation>
</comment>
<comment type="similarity">
    <text evidence="1">Belongs to the DeoC/FbaB aldolase family. DeoC type 1 subfamily.</text>
</comment>
<evidence type="ECO:0000255" key="1">
    <source>
        <dbReference type="HAMAP-Rule" id="MF_00114"/>
    </source>
</evidence>
<feature type="chain" id="PRO_1000015341" description="Deoxyribose-phosphate aldolase">
    <location>
        <begin position="1"/>
        <end position="223"/>
    </location>
</feature>
<feature type="active site" description="Proton donor/acceptor" evidence="1">
    <location>
        <position position="91"/>
    </location>
</feature>
<feature type="active site" description="Schiff-base intermediate with acetaldehyde" evidence="1">
    <location>
        <position position="153"/>
    </location>
</feature>
<feature type="active site" description="Proton donor/acceptor" evidence="1">
    <location>
        <position position="182"/>
    </location>
</feature>
<sequence>MTINYANYIDHTLLAMDATEEQIIKLCEEAKQHHFYAVCVNSGYVPVAAQQLAGTSVKVCSVIGFPLGAGLTEAKAFEAQAAIKAGAQEIDMVINVGWLKSGKIAEVKADIKAVRDNCASTPLKVILETCLLSDAQIVQVCEMCRELDVAFVKTSTGFSTGGAKEEHVKLMRATVGQDMGVKASGAVRDRATAETMIKAGATRIGTSSGVAIVSGQQASASSY</sequence>
<name>DEOC_YERE8</name>
<reference key="1">
    <citation type="journal article" date="2006" name="PLoS Genet.">
        <title>The complete genome sequence and comparative genome analysis of the high pathogenicity Yersinia enterocolitica strain 8081.</title>
        <authorList>
            <person name="Thomson N.R."/>
            <person name="Howard S."/>
            <person name="Wren B.W."/>
            <person name="Holden M.T.G."/>
            <person name="Crossman L."/>
            <person name="Challis G.L."/>
            <person name="Churcher C."/>
            <person name="Mungall K."/>
            <person name="Brooks K."/>
            <person name="Chillingworth T."/>
            <person name="Feltwell T."/>
            <person name="Abdellah Z."/>
            <person name="Hauser H."/>
            <person name="Jagels K."/>
            <person name="Maddison M."/>
            <person name="Moule S."/>
            <person name="Sanders M."/>
            <person name="Whitehead S."/>
            <person name="Quail M.A."/>
            <person name="Dougan G."/>
            <person name="Parkhill J."/>
            <person name="Prentice M.B."/>
        </authorList>
    </citation>
    <scope>NUCLEOTIDE SEQUENCE [LARGE SCALE GENOMIC DNA]</scope>
    <source>
        <strain>NCTC 13174 / 8081</strain>
    </source>
</reference>
<protein>
    <recommendedName>
        <fullName evidence="1">Deoxyribose-phosphate aldolase</fullName>
        <shortName evidence="1">DERA</shortName>
        <ecNumber evidence="1">4.1.2.4</ecNumber>
    </recommendedName>
    <alternativeName>
        <fullName evidence="1">2-deoxy-D-ribose 5-phosphate aldolase</fullName>
    </alternativeName>
    <alternativeName>
        <fullName evidence="1">Phosphodeoxyriboaldolase</fullName>
        <shortName evidence="1">Deoxyriboaldolase</shortName>
    </alternativeName>
</protein>
<gene>
    <name evidence="1" type="primary">deoC</name>
    <name type="ordered locus">YE1475</name>
</gene>
<dbReference type="EC" id="4.1.2.4" evidence="1"/>
<dbReference type="EMBL" id="AM286415">
    <property type="protein sequence ID" value="CAL11564.1"/>
    <property type="molecule type" value="Genomic_DNA"/>
</dbReference>
<dbReference type="RefSeq" id="WP_011816010.1">
    <property type="nucleotide sequence ID" value="NC_008800.1"/>
</dbReference>
<dbReference type="RefSeq" id="YP_001005782.1">
    <property type="nucleotide sequence ID" value="NC_008800.1"/>
</dbReference>
<dbReference type="SMR" id="A1JM38"/>
<dbReference type="KEGG" id="yen:YE1475"/>
<dbReference type="PATRIC" id="fig|393305.7.peg.1605"/>
<dbReference type="eggNOG" id="COG0274">
    <property type="taxonomic scope" value="Bacteria"/>
</dbReference>
<dbReference type="HOGENOM" id="CLU_053595_0_1_6"/>
<dbReference type="OrthoDB" id="6579831at2"/>
<dbReference type="UniPathway" id="UPA00002">
    <property type="reaction ID" value="UER00468"/>
</dbReference>
<dbReference type="Proteomes" id="UP000000642">
    <property type="component" value="Chromosome"/>
</dbReference>
<dbReference type="GO" id="GO:0005737">
    <property type="term" value="C:cytoplasm"/>
    <property type="evidence" value="ECO:0007669"/>
    <property type="project" value="UniProtKB-SubCell"/>
</dbReference>
<dbReference type="GO" id="GO:0004139">
    <property type="term" value="F:deoxyribose-phosphate aldolase activity"/>
    <property type="evidence" value="ECO:0007669"/>
    <property type="project" value="UniProtKB-UniRule"/>
</dbReference>
<dbReference type="GO" id="GO:0006018">
    <property type="term" value="P:2-deoxyribose 1-phosphate catabolic process"/>
    <property type="evidence" value="ECO:0007669"/>
    <property type="project" value="UniProtKB-UniRule"/>
</dbReference>
<dbReference type="GO" id="GO:0016052">
    <property type="term" value="P:carbohydrate catabolic process"/>
    <property type="evidence" value="ECO:0007669"/>
    <property type="project" value="TreeGrafter"/>
</dbReference>
<dbReference type="GO" id="GO:0009264">
    <property type="term" value="P:deoxyribonucleotide catabolic process"/>
    <property type="evidence" value="ECO:0007669"/>
    <property type="project" value="InterPro"/>
</dbReference>
<dbReference type="CDD" id="cd00959">
    <property type="entry name" value="DeoC"/>
    <property type="match status" value="1"/>
</dbReference>
<dbReference type="FunFam" id="3.20.20.70:FF:000044">
    <property type="entry name" value="Deoxyribose-phosphate aldolase"/>
    <property type="match status" value="1"/>
</dbReference>
<dbReference type="Gene3D" id="3.20.20.70">
    <property type="entry name" value="Aldolase class I"/>
    <property type="match status" value="1"/>
</dbReference>
<dbReference type="HAMAP" id="MF_00114">
    <property type="entry name" value="DeoC_type1"/>
    <property type="match status" value="1"/>
</dbReference>
<dbReference type="InterPro" id="IPR013785">
    <property type="entry name" value="Aldolase_TIM"/>
</dbReference>
<dbReference type="InterPro" id="IPR011343">
    <property type="entry name" value="DeoC"/>
</dbReference>
<dbReference type="InterPro" id="IPR002915">
    <property type="entry name" value="DeoC/FbaB/LacD_aldolase"/>
</dbReference>
<dbReference type="InterPro" id="IPR028581">
    <property type="entry name" value="DeoC_typeI"/>
</dbReference>
<dbReference type="NCBIfam" id="TIGR00126">
    <property type="entry name" value="deoC"/>
    <property type="match status" value="1"/>
</dbReference>
<dbReference type="PANTHER" id="PTHR10889">
    <property type="entry name" value="DEOXYRIBOSE-PHOSPHATE ALDOLASE"/>
    <property type="match status" value="1"/>
</dbReference>
<dbReference type="PANTHER" id="PTHR10889:SF1">
    <property type="entry name" value="DEOXYRIBOSE-PHOSPHATE ALDOLASE"/>
    <property type="match status" value="1"/>
</dbReference>
<dbReference type="Pfam" id="PF01791">
    <property type="entry name" value="DeoC"/>
    <property type="match status" value="1"/>
</dbReference>
<dbReference type="PIRSF" id="PIRSF001357">
    <property type="entry name" value="DeoC"/>
    <property type="match status" value="1"/>
</dbReference>
<dbReference type="SMART" id="SM01133">
    <property type="entry name" value="DeoC"/>
    <property type="match status" value="1"/>
</dbReference>
<dbReference type="SUPFAM" id="SSF51569">
    <property type="entry name" value="Aldolase"/>
    <property type="match status" value="1"/>
</dbReference>
<keyword id="KW-0963">Cytoplasm</keyword>
<keyword id="KW-0456">Lyase</keyword>
<keyword id="KW-0704">Schiff base</keyword>